<comment type="function">
    <text evidence="1">Produces ATP from ADP in the presence of a proton gradient across the membrane.</text>
</comment>
<comment type="subunit">
    <text evidence="1">F-type ATPases have 2 components, CF(1) - the catalytic core - and CF(0) - the membrane proton channel. CF(1) has five subunits: alpha(3), beta(3), gamma(1), delta(1), epsilon(1). CF(0) has three main subunits: a, b and c.</text>
</comment>
<comment type="subcellular location">
    <subcellularLocation>
        <location evidence="1">Cell membrane</location>
        <topology evidence="1">Peripheral membrane protein</topology>
    </subcellularLocation>
</comment>
<comment type="similarity">
    <text evidence="1">Belongs to the ATPase epsilon chain family.</text>
</comment>
<evidence type="ECO:0000255" key="1">
    <source>
        <dbReference type="HAMAP-Rule" id="MF_00530"/>
    </source>
</evidence>
<proteinExistence type="inferred from homology"/>
<sequence>MANLTKLKIVTPYAQNLEKDVYSVELKTSEGRIAVLPDHNPLMSIIENHVAYIRELPNAPRKPLLLLDGIVYVEEHQVRVFSDYFKFLDEIKIDEINSLLNKLKNDLANEEDDKKKLQLKSKIKLNESILIAYKDR</sequence>
<feature type="chain" id="PRO_1000127905" description="ATP synthase epsilon chain">
    <location>
        <begin position="1"/>
        <end position="136"/>
    </location>
</feature>
<accession>B5ZAW0</accession>
<name>ATPE_UREU1</name>
<organism>
    <name type="scientific">Ureaplasma urealyticum serovar 10 (strain ATCC 33699 / Western)</name>
    <dbReference type="NCBI Taxonomy" id="565575"/>
    <lineage>
        <taxon>Bacteria</taxon>
        <taxon>Bacillati</taxon>
        <taxon>Mycoplasmatota</taxon>
        <taxon>Mycoplasmoidales</taxon>
        <taxon>Mycoplasmoidaceae</taxon>
        <taxon>Ureaplasma</taxon>
    </lineage>
</organism>
<reference key="1">
    <citation type="submission" date="2008-10" db="EMBL/GenBank/DDBJ databases">
        <title>Genome sequence of Ureaplasma urealyticum serovar 10 ATCC-33699.</title>
        <authorList>
            <person name="Shrivastava S."/>
            <person name="Methe B.A."/>
            <person name="Glass J."/>
            <person name="White K."/>
            <person name="Duffy L.B."/>
        </authorList>
    </citation>
    <scope>NUCLEOTIDE SEQUENCE [LARGE SCALE GENOMIC DNA]</scope>
    <source>
        <strain>ATCC 33699 / Western</strain>
    </source>
</reference>
<gene>
    <name evidence="1" type="primary">atpC</name>
    <name type="ordered locus">UUR10_0143</name>
</gene>
<dbReference type="EMBL" id="CP001184">
    <property type="protein sequence ID" value="ACI59747.1"/>
    <property type="molecule type" value="Genomic_DNA"/>
</dbReference>
<dbReference type="RefSeq" id="WP_004025580.1">
    <property type="nucleotide sequence ID" value="NC_011374.1"/>
</dbReference>
<dbReference type="SMR" id="B5ZAW0"/>
<dbReference type="STRING" id="565575.UUR10_0143"/>
<dbReference type="GeneID" id="93848627"/>
<dbReference type="KEGG" id="uue:UUR10_0143"/>
<dbReference type="eggNOG" id="COG0355">
    <property type="taxonomic scope" value="Bacteria"/>
</dbReference>
<dbReference type="HOGENOM" id="CLU_1874552_0_0_14"/>
<dbReference type="OrthoDB" id="389606at2"/>
<dbReference type="Proteomes" id="UP000002018">
    <property type="component" value="Chromosome"/>
</dbReference>
<dbReference type="GO" id="GO:0005886">
    <property type="term" value="C:plasma membrane"/>
    <property type="evidence" value="ECO:0007669"/>
    <property type="project" value="UniProtKB-SubCell"/>
</dbReference>
<dbReference type="GO" id="GO:0045259">
    <property type="term" value="C:proton-transporting ATP synthase complex"/>
    <property type="evidence" value="ECO:0007669"/>
    <property type="project" value="UniProtKB-KW"/>
</dbReference>
<dbReference type="GO" id="GO:0005524">
    <property type="term" value="F:ATP binding"/>
    <property type="evidence" value="ECO:0007669"/>
    <property type="project" value="UniProtKB-UniRule"/>
</dbReference>
<dbReference type="GO" id="GO:0046933">
    <property type="term" value="F:proton-transporting ATP synthase activity, rotational mechanism"/>
    <property type="evidence" value="ECO:0007669"/>
    <property type="project" value="UniProtKB-UniRule"/>
</dbReference>
<dbReference type="CDD" id="cd12152">
    <property type="entry name" value="F1-ATPase_delta"/>
    <property type="match status" value="1"/>
</dbReference>
<dbReference type="Gene3D" id="2.60.15.10">
    <property type="entry name" value="F0F1 ATP synthase delta/epsilon subunit, N-terminal"/>
    <property type="match status" value="1"/>
</dbReference>
<dbReference type="HAMAP" id="MF_00530">
    <property type="entry name" value="ATP_synth_epsil_bac"/>
    <property type="match status" value="1"/>
</dbReference>
<dbReference type="InterPro" id="IPR001469">
    <property type="entry name" value="ATP_synth_F1_dsu/esu"/>
</dbReference>
<dbReference type="InterPro" id="IPR020546">
    <property type="entry name" value="ATP_synth_F1_dsu/esu_N"/>
</dbReference>
<dbReference type="InterPro" id="IPR036771">
    <property type="entry name" value="ATPsynth_dsu/esu_N"/>
</dbReference>
<dbReference type="NCBIfam" id="TIGR01216">
    <property type="entry name" value="ATP_synt_epsi"/>
    <property type="match status" value="1"/>
</dbReference>
<dbReference type="Pfam" id="PF02823">
    <property type="entry name" value="ATP-synt_DE_N"/>
    <property type="match status" value="1"/>
</dbReference>
<dbReference type="SUPFAM" id="SSF51344">
    <property type="entry name" value="Epsilon subunit of F1F0-ATP synthase N-terminal domain"/>
    <property type="match status" value="1"/>
</dbReference>
<keyword id="KW-0066">ATP synthesis</keyword>
<keyword id="KW-1003">Cell membrane</keyword>
<keyword id="KW-0139">CF(1)</keyword>
<keyword id="KW-0375">Hydrogen ion transport</keyword>
<keyword id="KW-0406">Ion transport</keyword>
<keyword id="KW-0472">Membrane</keyword>
<keyword id="KW-0813">Transport</keyword>
<protein>
    <recommendedName>
        <fullName evidence="1">ATP synthase epsilon chain</fullName>
    </recommendedName>
    <alternativeName>
        <fullName evidence="1">ATP synthase F1 sector epsilon subunit</fullName>
    </alternativeName>
    <alternativeName>
        <fullName evidence="1">F-ATPase epsilon subunit</fullName>
    </alternativeName>
</protein>